<proteinExistence type="inferred from homology"/>
<comment type="function">
    <text evidence="1">Methylates the ribose at the nucleotide 34 wobble position in the two leucyl isoacceptors tRNA(Leu)(CmAA) and tRNA(Leu)(cmnm5UmAA). Catalyzes the methyl transfer from S-adenosyl-L-methionine to the 2'-OH of the wobble nucleotide.</text>
</comment>
<comment type="catalytic activity">
    <reaction evidence="1">
        <text>cytidine(34) in tRNA + S-adenosyl-L-methionine = 2'-O-methylcytidine(34) in tRNA + S-adenosyl-L-homocysteine + H(+)</text>
        <dbReference type="Rhea" id="RHEA:43084"/>
        <dbReference type="Rhea" id="RHEA-COMP:10331"/>
        <dbReference type="Rhea" id="RHEA-COMP:10332"/>
        <dbReference type="ChEBI" id="CHEBI:15378"/>
        <dbReference type="ChEBI" id="CHEBI:57856"/>
        <dbReference type="ChEBI" id="CHEBI:59789"/>
        <dbReference type="ChEBI" id="CHEBI:74495"/>
        <dbReference type="ChEBI" id="CHEBI:82748"/>
        <dbReference type="EC" id="2.1.1.207"/>
    </reaction>
</comment>
<comment type="catalytic activity">
    <reaction evidence="1">
        <text>5-carboxymethylaminomethyluridine(34) in tRNA(Leu) + S-adenosyl-L-methionine = 5-carboxymethylaminomethyl-2'-O-methyluridine(34) in tRNA(Leu) + S-adenosyl-L-homocysteine + H(+)</text>
        <dbReference type="Rhea" id="RHEA:43088"/>
        <dbReference type="Rhea" id="RHEA-COMP:10333"/>
        <dbReference type="Rhea" id="RHEA-COMP:10334"/>
        <dbReference type="ChEBI" id="CHEBI:15378"/>
        <dbReference type="ChEBI" id="CHEBI:57856"/>
        <dbReference type="ChEBI" id="CHEBI:59789"/>
        <dbReference type="ChEBI" id="CHEBI:74508"/>
        <dbReference type="ChEBI" id="CHEBI:74511"/>
        <dbReference type="EC" id="2.1.1.207"/>
    </reaction>
</comment>
<comment type="subunit">
    <text evidence="1">Homodimer.</text>
</comment>
<comment type="subcellular location">
    <subcellularLocation>
        <location evidence="1">Cytoplasm</location>
    </subcellularLocation>
</comment>
<comment type="similarity">
    <text evidence="1">Belongs to the class IV-like SAM-binding methyltransferase superfamily. RNA methyltransferase TrmH family. TrmL subfamily.</text>
</comment>
<comment type="sequence caution" evidence="2">
    <conflict type="erroneous initiation">
        <sequence resource="EMBL-CDS" id="ABN89783"/>
    </conflict>
    <text>Extended N-terminus.</text>
</comment>
<accession>A3NR15</accession>
<dbReference type="EC" id="2.1.1.207" evidence="1"/>
<dbReference type="EMBL" id="CP000572">
    <property type="protein sequence ID" value="ABN89783.1"/>
    <property type="status" value="ALT_INIT"/>
    <property type="molecule type" value="Genomic_DNA"/>
</dbReference>
<dbReference type="RefSeq" id="WP_004185046.1">
    <property type="nucleotide sequence ID" value="NC_009076.1"/>
</dbReference>
<dbReference type="SMR" id="A3NR15"/>
<dbReference type="GeneID" id="92980867"/>
<dbReference type="KEGG" id="bpl:BURPS1106A_0503"/>
<dbReference type="HOGENOM" id="CLU_110125_1_0_4"/>
<dbReference type="Proteomes" id="UP000006738">
    <property type="component" value="Chromosome I"/>
</dbReference>
<dbReference type="GO" id="GO:0005737">
    <property type="term" value="C:cytoplasm"/>
    <property type="evidence" value="ECO:0007669"/>
    <property type="project" value="UniProtKB-SubCell"/>
</dbReference>
<dbReference type="GO" id="GO:0003723">
    <property type="term" value="F:RNA binding"/>
    <property type="evidence" value="ECO:0007669"/>
    <property type="project" value="InterPro"/>
</dbReference>
<dbReference type="GO" id="GO:0141102">
    <property type="term" value="F:tRNA (5-carboxymethylaminomethyluridine(34)-2'-O)-methyltransferase activity"/>
    <property type="evidence" value="ECO:0007669"/>
    <property type="project" value="RHEA"/>
</dbReference>
<dbReference type="GO" id="GO:0141098">
    <property type="term" value="F:tRNA (cytidine(34)-2'-O)-methyltransferase activity"/>
    <property type="evidence" value="ECO:0007669"/>
    <property type="project" value="RHEA"/>
</dbReference>
<dbReference type="GO" id="GO:0002131">
    <property type="term" value="P:wobble position cytosine ribose methylation"/>
    <property type="evidence" value="ECO:0007669"/>
    <property type="project" value="TreeGrafter"/>
</dbReference>
<dbReference type="GO" id="GO:0002132">
    <property type="term" value="P:wobble position uridine ribose methylation"/>
    <property type="evidence" value="ECO:0007669"/>
    <property type="project" value="TreeGrafter"/>
</dbReference>
<dbReference type="CDD" id="cd18094">
    <property type="entry name" value="SpoU-like_TrmL"/>
    <property type="match status" value="1"/>
</dbReference>
<dbReference type="FunFam" id="3.40.1280.10:FF:000002">
    <property type="entry name" value="Peptidylprolyl isomerase"/>
    <property type="match status" value="1"/>
</dbReference>
<dbReference type="Gene3D" id="3.40.1280.10">
    <property type="match status" value="1"/>
</dbReference>
<dbReference type="HAMAP" id="MF_01885">
    <property type="entry name" value="tRNA_methyltr_TrmL"/>
    <property type="match status" value="1"/>
</dbReference>
<dbReference type="InterPro" id="IPR029028">
    <property type="entry name" value="Alpha/beta_knot_MTases"/>
</dbReference>
<dbReference type="InterPro" id="IPR001537">
    <property type="entry name" value="SpoU_MeTrfase"/>
</dbReference>
<dbReference type="InterPro" id="IPR016914">
    <property type="entry name" value="TrmL"/>
</dbReference>
<dbReference type="InterPro" id="IPR029026">
    <property type="entry name" value="tRNA_m1G_MTases_N"/>
</dbReference>
<dbReference type="NCBIfam" id="TIGR00185">
    <property type="entry name" value="tRNA_yibK_trmL"/>
    <property type="match status" value="1"/>
</dbReference>
<dbReference type="PANTHER" id="PTHR42971">
    <property type="entry name" value="TRNA (CYTIDINE(34)-2'-O)-METHYLTRANSFERASE"/>
    <property type="match status" value="1"/>
</dbReference>
<dbReference type="PANTHER" id="PTHR42971:SF1">
    <property type="entry name" value="TRNA (CYTIDINE(34)-2'-O)-METHYLTRANSFERASE"/>
    <property type="match status" value="1"/>
</dbReference>
<dbReference type="Pfam" id="PF00588">
    <property type="entry name" value="SpoU_methylase"/>
    <property type="match status" value="1"/>
</dbReference>
<dbReference type="PIRSF" id="PIRSF029256">
    <property type="entry name" value="SpoU_TrmH_prd"/>
    <property type="match status" value="1"/>
</dbReference>
<dbReference type="SUPFAM" id="SSF75217">
    <property type="entry name" value="alpha/beta knot"/>
    <property type="match status" value="1"/>
</dbReference>
<sequence length="156" mass="17453">MFNVVLVEPEIPPNTGNVIRLCANTGARLHLIEPLGFPLDDAKMRRAGLDYHEYAQMRVHRDWDAFVAAEAPDPARMFAFTTRGSGRFHDRAFEPGDWFVFGAETRGLAPALVDRFAPEQRVRLPMRPGNRSLNLSNTVAVVVFEAWRQAGFEGGA</sequence>
<evidence type="ECO:0000255" key="1">
    <source>
        <dbReference type="HAMAP-Rule" id="MF_01885"/>
    </source>
</evidence>
<evidence type="ECO:0000305" key="2"/>
<protein>
    <recommendedName>
        <fullName evidence="1">tRNA (cytidine(34)-2'-O)-methyltransferase</fullName>
        <ecNumber evidence="1">2.1.1.207</ecNumber>
    </recommendedName>
    <alternativeName>
        <fullName evidence="1">tRNA (cytidine/uridine-2'-O-)-methyltransferase TrmL</fullName>
    </alternativeName>
</protein>
<keyword id="KW-0963">Cytoplasm</keyword>
<keyword id="KW-0489">Methyltransferase</keyword>
<keyword id="KW-0949">S-adenosyl-L-methionine</keyword>
<keyword id="KW-0808">Transferase</keyword>
<keyword id="KW-0819">tRNA processing</keyword>
<gene>
    <name evidence="1" type="primary">trmL</name>
    <name type="ordered locus">BURPS1106A_0503</name>
</gene>
<reference key="1">
    <citation type="journal article" date="2010" name="Genome Biol. Evol.">
        <title>Continuing evolution of Burkholderia mallei through genome reduction and large-scale rearrangements.</title>
        <authorList>
            <person name="Losada L."/>
            <person name="Ronning C.M."/>
            <person name="DeShazer D."/>
            <person name="Woods D."/>
            <person name="Fedorova N."/>
            <person name="Kim H.S."/>
            <person name="Shabalina S.A."/>
            <person name="Pearson T.R."/>
            <person name="Brinkac L."/>
            <person name="Tan P."/>
            <person name="Nandi T."/>
            <person name="Crabtree J."/>
            <person name="Badger J."/>
            <person name="Beckstrom-Sternberg S."/>
            <person name="Saqib M."/>
            <person name="Schutzer S.E."/>
            <person name="Keim P."/>
            <person name="Nierman W.C."/>
        </authorList>
    </citation>
    <scope>NUCLEOTIDE SEQUENCE [LARGE SCALE GENOMIC DNA]</scope>
    <source>
        <strain>1106a</strain>
    </source>
</reference>
<organism>
    <name type="scientific">Burkholderia pseudomallei (strain 1106a)</name>
    <dbReference type="NCBI Taxonomy" id="357348"/>
    <lineage>
        <taxon>Bacteria</taxon>
        <taxon>Pseudomonadati</taxon>
        <taxon>Pseudomonadota</taxon>
        <taxon>Betaproteobacteria</taxon>
        <taxon>Burkholderiales</taxon>
        <taxon>Burkholderiaceae</taxon>
        <taxon>Burkholderia</taxon>
        <taxon>pseudomallei group</taxon>
    </lineage>
</organism>
<name>TRML_BURP0</name>
<feature type="chain" id="PRO_0000401945" description="tRNA (cytidine(34)-2'-O)-methyltransferase">
    <location>
        <begin position="1"/>
        <end position="156"/>
    </location>
</feature>
<feature type="binding site" evidence="1">
    <location>
        <position position="102"/>
    </location>
    <ligand>
        <name>S-adenosyl-L-methionine</name>
        <dbReference type="ChEBI" id="CHEBI:59789"/>
    </ligand>
</feature>
<feature type="binding site" evidence="1">
    <location>
        <position position="124"/>
    </location>
    <ligand>
        <name>S-adenosyl-L-methionine</name>
        <dbReference type="ChEBI" id="CHEBI:59789"/>
    </ligand>
</feature>
<feature type="binding site" evidence="1">
    <location>
        <position position="132"/>
    </location>
    <ligand>
        <name>S-adenosyl-L-methionine</name>
        <dbReference type="ChEBI" id="CHEBI:59789"/>
    </ligand>
</feature>